<dbReference type="EMBL" id="Z49939">
    <property type="status" value="NOT_ANNOTATED_CDS"/>
    <property type="molecule type" value="Genomic_DNA"/>
</dbReference>
<dbReference type="EMBL" id="BK006946">
    <property type="protein sequence ID" value="DAA10130.1"/>
    <property type="molecule type" value="Genomic_DNA"/>
</dbReference>
<dbReference type="RefSeq" id="NP_878146.1">
    <property type="nucleotide sequence ID" value="NM_001184573.1"/>
</dbReference>
<dbReference type="BioGRID" id="37046">
    <property type="interactions" value="45"/>
</dbReference>
<dbReference type="FunCoup" id="Q3E7B5">
    <property type="interactions" value="11"/>
</dbReference>
<dbReference type="STRING" id="4932.YMR230W-A"/>
<dbReference type="PaxDb" id="4932-YMR230W-A"/>
<dbReference type="EnsemblFungi" id="YMR230W-A_mRNA">
    <property type="protein sequence ID" value="YMR230W-A"/>
    <property type="gene ID" value="YMR230W-A"/>
</dbReference>
<dbReference type="GeneID" id="1466504"/>
<dbReference type="KEGG" id="sce:YMR230W-A"/>
<dbReference type="AGR" id="SGD:S000028576"/>
<dbReference type="SGD" id="S000028576">
    <property type="gene designation" value="YMR230W-A"/>
</dbReference>
<dbReference type="VEuPathDB" id="FungiDB:YMR230W-A"/>
<dbReference type="HOGENOM" id="CLU_2905446_0_0_1"/>
<dbReference type="InParanoid" id="Q3E7B5"/>
<dbReference type="BioCyc" id="YEAST:G3O-33028-MONOMER"/>
<dbReference type="BioGRID-ORCS" id="1466504">
    <property type="hits" value="0 hits in 10 CRISPR screens"/>
</dbReference>
<dbReference type="PRO" id="PR:Q3E7B5"/>
<dbReference type="Proteomes" id="UP000002311">
    <property type="component" value="Chromosome XIII"/>
</dbReference>
<dbReference type="RNAct" id="Q3E7B5">
    <property type="molecule type" value="protein"/>
</dbReference>
<proteinExistence type="predicted"/>
<organism>
    <name type="scientific">Saccharomyces cerevisiae (strain ATCC 204508 / S288c)</name>
    <name type="common">Baker's yeast</name>
    <dbReference type="NCBI Taxonomy" id="559292"/>
    <lineage>
        <taxon>Eukaryota</taxon>
        <taxon>Fungi</taxon>
        <taxon>Dikarya</taxon>
        <taxon>Ascomycota</taxon>
        <taxon>Saccharomycotina</taxon>
        <taxon>Saccharomycetes</taxon>
        <taxon>Saccharomycetales</taxon>
        <taxon>Saccharomycetaceae</taxon>
        <taxon>Saccharomyces</taxon>
    </lineage>
</organism>
<reference key="1">
    <citation type="journal article" date="1997" name="Nature">
        <title>The nucleotide sequence of Saccharomyces cerevisiae chromosome XIII.</title>
        <authorList>
            <person name="Bowman S."/>
            <person name="Churcher C.M."/>
            <person name="Badcock K."/>
            <person name="Brown D."/>
            <person name="Chillingworth T."/>
            <person name="Connor R."/>
            <person name="Dedman K."/>
            <person name="Devlin K."/>
            <person name="Gentles S."/>
            <person name="Hamlin N."/>
            <person name="Hunt S."/>
            <person name="Jagels K."/>
            <person name="Lye G."/>
            <person name="Moule S."/>
            <person name="Odell C."/>
            <person name="Pearson D."/>
            <person name="Rajandream M.A."/>
            <person name="Rice P."/>
            <person name="Skelton J."/>
            <person name="Walsh S.V."/>
            <person name="Whitehead S."/>
            <person name="Barrell B.G."/>
        </authorList>
    </citation>
    <scope>NUCLEOTIDE SEQUENCE [LARGE SCALE GENOMIC DNA]</scope>
    <source>
        <strain>ATCC 204508 / S288c</strain>
    </source>
</reference>
<reference key="2">
    <citation type="journal article" date="2014" name="G3 (Bethesda)">
        <title>The reference genome sequence of Saccharomyces cerevisiae: Then and now.</title>
        <authorList>
            <person name="Engel S.R."/>
            <person name="Dietrich F.S."/>
            <person name="Fisk D.G."/>
            <person name="Binkley G."/>
            <person name="Balakrishnan R."/>
            <person name="Costanzo M.C."/>
            <person name="Dwight S.S."/>
            <person name="Hitz B.C."/>
            <person name="Karra K."/>
            <person name="Nash R.S."/>
            <person name="Weng S."/>
            <person name="Wong E.D."/>
            <person name="Lloyd P."/>
            <person name="Skrzypek M.S."/>
            <person name="Miyasato S.R."/>
            <person name="Simison M."/>
            <person name="Cherry J.M."/>
        </authorList>
    </citation>
    <scope>GENOME REANNOTATION</scope>
    <source>
        <strain>ATCC 204508 / S288c</strain>
    </source>
</reference>
<reference key="3">
    <citation type="journal article" date="2003" name="Genome Res.">
        <title>Systematic discovery of new genes in the Saccharomyces cerevisiae genome.</title>
        <authorList>
            <person name="Kessler M.M."/>
            <person name="Zeng Q."/>
            <person name="Hogan S."/>
            <person name="Cook R."/>
            <person name="Morales A.J."/>
            <person name="Cottarel G."/>
        </authorList>
    </citation>
    <scope>GENOME REANNOTATION</scope>
</reference>
<feature type="chain" id="PRO_0000247791" description="Uncharacterized protein YMR230W-A">
    <location>
        <begin position="1"/>
        <end position="62"/>
    </location>
</feature>
<keyword id="KW-1185">Reference proteome</keyword>
<sequence length="62" mass="7276">MCIIVKYSQCNLFFQDVLRCRHVLCMLFSIVVHFRLSSFVSVCGVRIMCNCINCSRFIHNIN</sequence>
<name>YM230_YEAST</name>
<accession>Q3E7B5</accession>
<accession>D6W056</accession>
<gene>
    <name type="ordered locus">YMR230W-A</name>
</gene>
<protein>
    <recommendedName>
        <fullName>Uncharacterized protein YMR230W-A</fullName>
    </recommendedName>
</protein>